<feature type="chain" id="PRO_0000068015" description="Dihydrolipoyl dehydrogenase">
    <location>
        <begin position="1"/>
        <end position="470"/>
    </location>
</feature>
<feature type="active site" description="Proton acceptor" evidence="1">
    <location>
        <position position="446"/>
    </location>
</feature>
<feature type="binding site" evidence="2">
    <location>
        <begin position="39"/>
        <end position="47"/>
    </location>
    <ligand>
        <name>FAD</name>
        <dbReference type="ChEBI" id="CHEBI:57692"/>
    </ligand>
</feature>
<feature type="binding site" evidence="2">
    <location>
        <position position="56"/>
    </location>
    <ligand>
        <name>FAD</name>
        <dbReference type="ChEBI" id="CHEBI:57692"/>
    </ligand>
</feature>
<feature type="binding site" evidence="1">
    <location>
        <position position="119"/>
    </location>
    <ligand>
        <name>FAD</name>
        <dbReference type="ChEBI" id="CHEBI:57692"/>
    </ligand>
</feature>
<feature type="binding site" evidence="1">
    <location>
        <begin position="183"/>
        <end position="187"/>
    </location>
    <ligand>
        <name>NAD(+)</name>
        <dbReference type="ChEBI" id="CHEBI:57540"/>
    </ligand>
</feature>
<feature type="binding site" evidence="1">
    <location>
        <position position="206"/>
    </location>
    <ligand>
        <name>NAD(+)</name>
        <dbReference type="ChEBI" id="CHEBI:57540"/>
    </ligand>
</feature>
<feature type="binding site" evidence="1">
    <location>
        <begin position="271"/>
        <end position="274"/>
    </location>
    <ligand>
        <name>NAD(+)</name>
        <dbReference type="ChEBI" id="CHEBI:57540"/>
    </ligand>
</feature>
<feature type="binding site" evidence="2">
    <location>
        <position position="314"/>
    </location>
    <ligand>
        <name>FAD</name>
        <dbReference type="ChEBI" id="CHEBI:57692"/>
    </ligand>
</feature>
<feature type="binding site" evidence="2">
    <location>
        <position position="322"/>
    </location>
    <ligand>
        <name>FAD</name>
        <dbReference type="ChEBI" id="CHEBI:57692"/>
    </ligand>
</feature>
<feature type="disulfide bond" description="Redox-active" evidence="1">
    <location>
        <begin position="47"/>
        <end position="52"/>
    </location>
</feature>
<feature type="strand" evidence="4">
    <location>
        <begin position="11"/>
        <end position="15"/>
    </location>
</feature>
<feature type="helix" evidence="4">
    <location>
        <begin position="19"/>
        <end position="30"/>
    </location>
</feature>
<feature type="strand" evidence="4">
    <location>
        <begin position="35"/>
        <end position="41"/>
    </location>
</feature>
<feature type="helix" evidence="4">
    <location>
        <begin position="45"/>
        <end position="49"/>
    </location>
</feature>
<feature type="helix" evidence="4">
    <location>
        <begin position="52"/>
        <end position="69"/>
    </location>
</feature>
<feature type="helix" evidence="4">
    <location>
        <begin position="72"/>
        <end position="74"/>
    </location>
</feature>
<feature type="helix" evidence="4">
    <location>
        <begin position="85"/>
        <end position="108"/>
    </location>
</feature>
<feature type="turn" evidence="4">
    <location>
        <begin position="109"/>
        <end position="111"/>
    </location>
</feature>
<feature type="strand" evidence="4">
    <location>
        <begin position="113"/>
        <end position="123"/>
    </location>
</feature>
<feature type="strand" evidence="4">
    <location>
        <begin position="126"/>
        <end position="131"/>
    </location>
</feature>
<feature type="strand" evidence="4">
    <location>
        <begin position="134"/>
        <end position="139"/>
    </location>
</feature>
<feature type="strand" evidence="4">
    <location>
        <begin position="141"/>
        <end position="145"/>
    </location>
</feature>
<feature type="strand" evidence="4">
    <location>
        <begin position="149"/>
        <end position="151"/>
    </location>
</feature>
<feature type="strand" evidence="4">
    <location>
        <begin position="161"/>
        <end position="164"/>
    </location>
</feature>
<feature type="helix" evidence="4">
    <location>
        <begin position="166"/>
        <end position="170"/>
    </location>
</feature>
<feature type="strand" evidence="4">
    <location>
        <begin position="177"/>
        <end position="182"/>
    </location>
</feature>
<feature type="helix" evidence="4">
    <location>
        <begin position="186"/>
        <end position="197"/>
    </location>
</feature>
<feature type="strand" evidence="4">
    <location>
        <begin position="201"/>
        <end position="212"/>
    </location>
</feature>
<feature type="helix" evidence="4">
    <location>
        <begin position="217"/>
        <end position="229"/>
    </location>
</feature>
<feature type="strand" evidence="4">
    <location>
        <begin position="233"/>
        <end position="246"/>
    </location>
</feature>
<feature type="strand" evidence="4">
    <location>
        <begin position="249"/>
        <end position="256"/>
    </location>
</feature>
<feature type="strand" evidence="4">
    <location>
        <begin position="259"/>
        <end position="270"/>
    </location>
</feature>
<feature type="strand" evidence="4">
    <location>
        <begin position="274"/>
        <end position="277"/>
    </location>
</feature>
<feature type="strand" evidence="4">
    <location>
        <begin position="279"/>
        <end position="282"/>
    </location>
</feature>
<feature type="turn" evidence="4">
    <location>
        <begin position="283"/>
        <end position="287"/>
    </location>
</feature>
<feature type="strand" evidence="4">
    <location>
        <begin position="309"/>
        <end position="311"/>
    </location>
</feature>
<feature type="helix" evidence="4">
    <location>
        <begin position="313"/>
        <end position="315"/>
    </location>
</feature>
<feature type="strand" evidence="4">
    <location>
        <begin position="316"/>
        <end position="318"/>
    </location>
</feature>
<feature type="helix" evidence="4">
    <location>
        <begin position="322"/>
        <end position="336"/>
    </location>
</feature>
<feature type="strand" evidence="4">
    <location>
        <begin position="350"/>
        <end position="352"/>
    </location>
</feature>
<feature type="strand" evidence="4">
    <location>
        <begin position="354"/>
        <end position="356"/>
    </location>
</feature>
<feature type="strand" evidence="4">
    <location>
        <begin position="358"/>
        <end position="362"/>
    </location>
</feature>
<feature type="helix" evidence="4">
    <location>
        <begin position="365"/>
        <end position="369"/>
    </location>
</feature>
<feature type="turn" evidence="4">
    <location>
        <begin position="370"/>
        <end position="372"/>
    </location>
</feature>
<feature type="strand" evidence="4">
    <location>
        <begin position="375"/>
        <end position="381"/>
    </location>
</feature>
<feature type="helix" evidence="4">
    <location>
        <begin position="382"/>
        <end position="384"/>
    </location>
</feature>
<feature type="helix" evidence="4">
    <location>
        <begin position="386"/>
        <end position="391"/>
    </location>
</feature>
<feature type="strand" evidence="4">
    <location>
        <begin position="397"/>
        <end position="403"/>
    </location>
</feature>
<feature type="turn" evidence="4">
    <location>
        <begin position="404"/>
        <end position="406"/>
    </location>
</feature>
<feature type="strand" evidence="4">
    <location>
        <begin position="408"/>
        <end position="416"/>
    </location>
</feature>
<feature type="helix" evidence="4">
    <location>
        <begin position="419"/>
        <end position="432"/>
    </location>
</feature>
<feature type="helix" evidence="4">
    <location>
        <begin position="436"/>
        <end position="441"/>
    </location>
</feature>
<feature type="helix" evidence="4">
    <location>
        <begin position="451"/>
        <end position="459"/>
    </location>
</feature>
<protein>
    <recommendedName>
        <fullName>Dihydrolipoyl dehydrogenase</fullName>
        <ecNumber>1.8.1.4</ecNumber>
    </recommendedName>
    <alternativeName>
        <fullName>Dihydrolipoamide dehydrogenase</fullName>
    </alternativeName>
    <alternativeName>
        <fullName>E3 component of pyruvate complex</fullName>
    </alternativeName>
</protein>
<reference key="1">
    <citation type="journal article" date="1990" name="Eur. J. Biochem.">
        <title>Cloning and sequence analysis of the genes encoding the alpha and beta subunits of the E1 component of the pyruvate dehydrogenase multienzyme complex of Bacillus stearothermophilus.</title>
        <authorList>
            <person name="Hawkins C.F."/>
            <person name="Borges A."/>
            <person name="Perham R.N."/>
        </authorList>
    </citation>
    <scope>NUCLEOTIDE SEQUENCE [GENOMIC DNA]</scope>
    <scope>PARTIAL PROTEIN SEQUENCE</scope>
    <source>
        <strain>ATCC 29609 / DSM 2027 / NCA 1503 / NCIMB 8924</strain>
    </source>
</reference>
<reference key="2">
    <citation type="journal article" date="1990" name="Eur. J. Biochem.">
        <title>Cloning and sequence analysis of the genes encoding the dihydrolipoamide acetyltransferase and dihydrolipoamide dehydrogenase components of the pyruvate dehydrogenase multienzyme complex of Bacillus stearothermophilus.</title>
        <authorList>
            <person name="Borges A."/>
            <person name="Hawkins C.F."/>
            <person name="Packman L.C."/>
            <person name="Perham R.N."/>
        </authorList>
    </citation>
    <scope>NUCLEOTIDE SEQUENCE [GENOMIC DNA]</scope>
    <source>
        <strain>ATCC 29609 / DSM 2027 / NCA 1503 / NCIMB 8924</strain>
    </source>
</reference>
<reference key="3">
    <citation type="journal article" date="1982" name="FEBS Lett.">
        <title>An amino acid sequence in the active site of lipoamide dehydrogenase from Bacillus stearothermophilus.</title>
        <authorList>
            <person name="Packman L.C."/>
            <person name="Perham R.N."/>
        </authorList>
    </citation>
    <scope>PROTEIN SEQUENCE OF 41-56</scope>
</reference>
<reference key="4">
    <citation type="journal article" date="1996" name="Structure">
        <title>Protein-protein interactions in the pyruvate dehydrogenase multienzyme complex: dihydrolipoamide dehydrogenase complexed with the binding domain of dihydrolipoamide acetyltransferase.</title>
        <authorList>
            <person name="Mande S.S."/>
            <person name="Sarfaty S."/>
            <person name="Allen M.D."/>
            <person name="Perham R.N."/>
            <person name="Hol W.G.J."/>
        </authorList>
    </citation>
    <scope>X-RAY CRYSTALLOGRAPHY (2.6 ANGSTROMS) IN COMPLEX WITH FAD</scope>
    <scope>SUBUNIT</scope>
</reference>
<dbReference type="EC" id="1.8.1.4"/>
<dbReference type="EMBL" id="X53560">
    <property type="protein sequence ID" value="CAA37631.1"/>
    <property type="molecule type" value="Genomic_DNA"/>
</dbReference>
<dbReference type="PIR" id="S13839">
    <property type="entry name" value="S13839"/>
</dbReference>
<dbReference type="PDB" id="1EBD">
    <property type="method" value="X-ray"/>
    <property type="resolution" value="2.60 A"/>
    <property type="chains" value="A/B=7-461"/>
</dbReference>
<dbReference type="PDBsum" id="1EBD"/>
<dbReference type="SMR" id="P11959"/>
<dbReference type="DIP" id="DIP-6155N"/>
<dbReference type="IntAct" id="P11959">
    <property type="interactions" value="1"/>
</dbReference>
<dbReference type="BRENDA" id="1.8.1.4">
    <property type="organism ID" value="623"/>
</dbReference>
<dbReference type="EvolutionaryTrace" id="P11959"/>
<dbReference type="GO" id="GO:0005737">
    <property type="term" value="C:cytoplasm"/>
    <property type="evidence" value="ECO:0007669"/>
    <property type="project" value="UniProtKB-SubCell"/>
</dbReference>
<dbReference type="GO" id="GO:0004148">
    <property type="term" value="F:dihydrolipoyl dehydrogenase (NADH) activity"/>
    <property type="evidence" value="ECO:0007669"/>
    <property type="project" value="UniProtKB-EC"/>
</dbReference>
<dbReference type="GO" id="GO:0050660">
    <property type="term" value="F:flavin adenine dinucleotide binding"/>
    <property type="evidence" value="ECO:0007669"/>
    <property type="project" value="InterPro"/>
</dbReference>
<dbReference type="GO" id="GO:0006103">
    <property type="term" value="P:2-oxoglutarate metabolic process"/>
    <property type="evidence" value="ECO:0007669"/>
    <property type="project" value="TreeGrafter"/>
</dbReference>
<dbReference type="FunFam" id="3.30.390.30:FF:000001">
    <property type="entry name" value="Dihydrolipoyl dehydrogenase"/>
    <property type="match status" value="1"/>
</dbReference>
<dbReference type="FunFam" id="3.50.50.60:FF:000037">
    <property type="entry name" value="Dihydrolipoyl dehydrogenase"/>
    <property type="match status" value="1"/>
</dbReference>
<dbReference type="Gene3D" id="3.30.390.30">
    <property type="match status" value="1"/>
</dbReference>
<dbReference type="Gene3D" id="3.50.50.60">
    <property type="entry name" value="FAD/NAD(P)-binding domain"/>
    <property type="match status" value="2"/>
</dbReference>
<dbReference type="InterPro" id="IPR050151">
    <property type="entry name" value="Class-I_Pyr_Nuc-Dis_Oxidored"/>
</dbReference>
<dbReference type="InterPro" id="IPR036188">
    <property type="entry name" value="FAD/NAD-bd_sf"/>
</dbReference>
<dbReference type="InterPro" id="IPR023753">
    <property type="entry name" value="FAD/NAD-binding_dom"/>
</dbReference>
<dbReference type="InterPro" id="IPR016156">
    <property type="entry name" value="FAD/NAD-linked_Rdtase_dimer_sf"/>
</dbReference>
<dbReference type="InterPro" id="IPR006258">
    <property type="entry name" value="Lipoamide_DH"/>
</dbReference>
<dbReference type="InterPro" id="IPR001100">
    <property type="entry name" value="Pyr_nuc-diS_OxRdtase"/>
</dbReference>
<dbReference type="InterPro" id="IPR004099">
    <property type="entry name" value="Pyr_nucl-diS_OxRdtase_dimer"/>
</dbReference>
<dbReference type="InterPro" id="IPR012999">
    <property type="entry name" value="Pyr_OxRdtase_I_AS"/>
</dbReference>
<dbReference type="NCBIfam" id="TIGR01350">
    <property type="entry name" value="lipoamide_DH"/>
    <property type="match status" value="1"/>
</dbReference>
<dbReference type="PANTHER" id="PTHR22912:SF160">
    <property type="entry name" value="DIHYDROLIPOYL DEHYDROGENASE"/>
    <property type="match status" value="1"/>
</dbReference>
<dbReference type="PANTHER" id="PTHR22912">
    <property type="entry name" value="DISULFIDE OXIDOREDUCTASE"/>
    <property type="match status" value="1"/>
</dbReference>
<dbReference type="Pfam" id="PF07992">
    <property type="entry name" value="Pyr_redox_2"/>
    <property type="match status" value="1"/>
</dbReference>
<dbReference type="Pfam" id="PF02852">
    <property type="entry name" value="Pyr_redox_dim"/>
    <property type="match status" value="1"/>
</dbReference>
<dbReference type="PIRSF" id="PIRSF000350">
    <property type="entry name" value="Mercury_reductase_MerA"/>
    <property type="match status" value="1"/>
</dbReference>
<dbReference type="PRINTS" id="PR00368">
    <property type="entry name" value="FADPNR"/>
</dbReference>
<dbReference type="PRINTS" id="PR00411">
    <property type="entry name" value="PNDRDTASEI"/>
</dbReference>
<dbReference type="SUPFAM" id="SSF51905">
    <property type="entry name" value="FAD/NAD(P)-binding domain"/>
    <property type="match status" value="1"/>
</dbReference>
<dbReference type="SUPFAM" id="SSF55424">
    <property type="entry name" value="FAD/NAD-linked reductases, dimerisation (C-terminal) domain"/>
    <property type="match status" value="1"/>
</dbReference>
<dbReference type="PROSITE" id="PS00076">
    <property type="entry name" value="PYRIDINE_REDOX_1"/>
    <property type="match status" value="1"/>
</dbReference>
<gene>
    <name type="primary">pdhD</name>
</gene>
<sequence length="470" mass="49356">MVVGDFAIETETLVVGAGPGGYVAAIRAAQLGQKVTIVEKGNLGGVCLNVGCIPSKALISASHRYEQAKHSEEMGIKAENVTIDFAKVQEWKASVVKKLTGGVEGLLKGNKVEIVKGEAYFVDANTVRVVNGDSAQTYTFKNAIIATGSRPIELPNFKFSNRILDSTGALNLGEVPKSLVVIGGGYIGIELGTAYANFGTKVTILEGAGEILSGFEKQMAAIIKKRLKKKGVEVVTNALAKGAEEREDGVTVTYEANGETKTIDADYVLVTVGRRPNTDELGLEQIGIKMTNRGLIEVDQQCRTSVPNIFAIGDIVPGPALAHKASYEGKVAAEAIAGHPSAVDYVAIPAVVFSDPECASVGYFEQQAKDEGIDVIAAKFPFAANGRALALNDTDGFLKLVVRKEDGVIIGAQIIGPNASDMIAELGLAIEAGMTAEDIALTIHAHPTLGEIAMEAAEVALGTPIHIITK</sequence>
<comment type="function">
    <text>Lipoamide dehydrogenase is a component of the alpha-ketoacid dehydrogenase complexes.</text>
</comment>
<comment type="catalytic activity">
    <reaction>
        <text>N(6)-[(R)-dihydrolipoyl]-L-lysyl-[protein] + NAD(+) = N(6)-[(R)-lipoyl]-L-lysyl-[protein] + NADH + H(+)</text>
        <dbReference type="Rhea" id="RHEA:15045"/>
        <dbReference type="Rhea" id="RHEA-COMP:10474"/>
        <dbReference type="Rhea" id="RHEA-COMP:10475"/>
        <dbReference type="ChEBI" id="CHEBI:15378"/>
        <dbReference type="ChEBI" id="CHEBI:57540"/>
        <dbReference type="ChEBI" id="CHEBI:57945"/>
        <dbReference type="ChEBI" id="CHEBI:83099"/>
        <dbReference type="ChEBI" id="CHEBI:83100"/>
        <dbReference type="EC" id="1.8.1.4"/>
    </reaction>
</comment>
<comment type="cofactor">
    <cofactor>
        <name>FAD</name>
        <dbReference type="ChEBI" id="CHEBI:57692"/>
    </cofactor>
    <text>Binds 1 FAD per subunit.</text>
</comment>
<comment type="subunit">
    <text evidence="2">Homodimer. Identified in a complex with PdhC.</text>
</comment>
<comment type="interaction">
    <interactant intactId="EBI-9021392">
        <id>P11959</id>
    </interactant>
    <interactant intactId="EBI-1040691">
        <id>P11961</id>
        <label>pdhC</label>
    </interactant>
    <organismsDiffer>false</organismsDiffer>
    <experiments>3</experiments>
</comment>
<comment type="subcellular location">
    <subcellularLocation>
        <location>Cytoplasm</location>
    </subcellularLocation>
</comment>
<comment type="miscellaneous">
    <text>The active site is a redox-active disulfide bond.</text>
</comment>
<comment type="similarity">
    <text evidence="3">Belongs to the class-I pyridine nucleotide-disulfide oxidoreductase family.</text>
</comment>
<evidence type="ECO:0000250" key="1"/>
<evidence type="ECO:0000269" key="2">
    <source>
    </source>
</evidence>
<evidence type="ECO:0000305" key="3"/>
<evidence type="ECO:0007829" key="4">
    <source>
        <dbReference type="PDB" id="1EBD"/>
    </source>
</evidence>
<keyword id="KW-0002">3D-structure</keyword>
<keyword id="KW-0963">Cytoplasm</keyword>
<keyword id="KW-0903">Direct protein sequencing</keyword>
<keyword id="KW-1015">Disulfide bond</keyword>
<keyword id="KW-0274">FAD</keyword>
<keyword id="KW-0285">Flavoprotein</keyword>
<keyword id="KW-0520">NAD</keyword>
<keyword id="KW-0560">Oxidoreductase</keyword>
<keyword id="KW-0676">Redox-active center</keyword>
<proteinExistence type="evidence at protein level"/>
<organism>
    <name type="scientific">Geobacillus stearothermophilus</name>
    <name type="common">Bacillus stearothermophilus</name>
    <dbReference type="NCBI Taxonomy" id="1422"/>
    <lineage>
        <taxon>Bacteria</taxon>
        <taxon>Bacillati</taxon>
        <taxon>Bacillota</taxon>
        <taxon>Bacilli</taxon>
        <taxon>Bacillales</taxon>
        <taxon>Anoxybacillaceae</taxon>
        <taxon>Geobacillus</taxon>
    </lineage>
</organism>
<accession>P11959</accession>
<name>DLDH1_GEOSE</name>